<feature type="chain" id="PRO_0000429571" description="Putative DNA-binding protein At1g48610">
    <location>
        <begin position="1"/>
        <end position="212"/>
    </location>
</feature>
<feature type="DNA-binding region" description="A.T hook 1">
    <location>
        <begin position="45"/>
        <end position="56"/>
    </location>
</feature>
<feature type="DNA-binding region" description="A.T hook 2">
    <location>
        <begin position="70"/>
        <end position="79"/>
    </location>
</feature>
<feature type="DNA-binding region" description="A.T hook 3">
    <location>
        <begin position="94"/>
        <end position="98"/>
    </location>
</feature>
<feature type="DNA-binding region" description="A.T hook 4">
    <location>
        <begin position="118"/>
        <end position="127"/>
    </location>
</feature>
<feature type="region of interest" description="Disordered" evidence="2">
    <location>
        <begin position="1"/>
        <end position="130"/>
    </location>
</feature>
<feature type="coiled-coil region" evidence="1">
    <location>
        <begin position="176"/>
        <end position="210"/>
    </location>
</feature>
<feature type="compositionally biased region" description="Polar residues" evidence="2">
    <location>
        <begin position="27"/>
        <end position="44"/>
    </location>
</feature>
<feature type="compositionally biased region" description="Polar residues" evidence="2">
    <location>
        <begin position="57"/>
        <end position="72"/>
    </location>
</feature>
<feature type="compositionally biased region" description="Low complexity" evidence="2">
    <location>
        <begin position="103"/>
        <end position="113"/>
    </location>
</feature>
<evidence type="ECO:0000255" key="1"/>
<evidence type="ECO:0000256" key="2">
    <source>
        <dbReference type="SAM" id="MobiDB-lite"/>
    </source>
</evidence>
<evidence type="ECO:0000305" key="3"/>
<proteinExistence type="evidence at protein level"/>
<sequence>MAKTALTPPASGSEVPRSGTPGDASGNKPQTDATGVSATDTASQKRGRGRPPKAKSDSSQIGAVSAKASTKPSGRPKRNVAQAVPSTSVAAAVKKRGRAKRSTVTAAVVTTATGEGSRKRGRPKKDDVAAATVPAETVVAPAKRRGRKPTVEVAAQPVRRTRKSTSVAPVAANVGDLKKRTALLQKKVKEAAAKLKQAVTAIDEVQKLADGM</sequence>
<organism>
    <name type="scientific">Arabidopsis thaliana</name>
    <name type="common">Mouse-ear cress</name>
    <dbReference type="NCBI Taxonomy" id="3702"/>
    <lineage>
        <taxon>Eukaryota</taxon>
        <taxon>Viridiplantae</taxon>
        <taxon>Streptophyta</taxon>
        <taxon>Embryophyta</taxon>
        <taxon>Tracheophyta</taxon>
        <taxon>Spermatophyta</taxon>
        <taxon>Magnoliopsida</taxon>
        <taxon>eudicotyledons</taxon>
        <taxon>Gunneridae</taxon>
        <taxon>Pentapetalae</taxon>
        <taxon>rosids</taxon>
        <taxon>malvids</taxon>
        <taxon>Brassicales</taxon>
        <taxon>Brassicaceae</taxon>
        <taxon>Camelineae</taxon>
        <taxon>Arabidopsis</taxon>
    </lineage>
</organism>
<name>D1861_ARATH</name>
<accession>Q94AD1</accession>
<reference key="1">
    <citation type="journal article" date="2000" name="Nature">
        <title>Sequence and analysis of chromosome 1 of the plant Arabidopsis thaliana.</title>
        <authorList>
            <person name="Theologis A."/>
            <person name="Ecker J.R."/>
            <person name="Palm C.J."/>
            <person name="Federspiel N.A."/>
            <person name="Kaul S."/>
            <person name="White O."/>
            <person name="Alonso J."/>
            <person name="Altafi H."/>
            <person name="Araujo R."/>
            <person name="Bowman C.L."/>
            <person name="Brooks S.Y."/>
            <person name="Buehler E."/>
            <person name="Chan A."/>
            <person name="Chao Q."/>
            <person name="Chen H."/>
            <person name="Cheuk R.F."/>
            <person name="Chin C.W."/>
            <person name="Chung M.K."/>
            <person name="Conn L."/>
            <person name="Conway A.B."/>
            <person name="Conway A.R."/>
            <person name="Creasy T.H."/>
            <person name="Dewar K."/>
            <person name="Dunn P."/>
            <person name="Etgu P."/>
            <person name="Feldblyum T.V."/>
            <person name="Feng J.-D."/>
            <person name="Fong B."/>
            <person name="Fujii C.Y."/>
            <person name="Gill J.E."/>
            <person name="Goldsmith A.D."/>
            <person name="Haas B."/>
            <person name="Hansen N.F."/>
            <person name="Hughes B."/>
            <person name="Huizar L."/>
            <person name="Hunter J.L."/>
            <person name="Jenkins J."/>
            <person name="Johnson-Hopson C."/>
            <person name="Khan S."/>
            <person name="Khaykin E."/>
            <person name="Kim C.J."/>
            <person name="Koo H.L."/>
            <person name="Kremenetskaia I."/>
            <person name="Kurtz D.B."/>
            <person name="Kwan A."/>
            <person name="Lam B."/>
            <person name="Langin-Hooper S."/>
            <person name="Lee A."/>
            <person name="Lee J.M."/>
            <person name="Lenz C.A."/>
            <person name="Li J.H."/>
            <person name="Li Y.-P."/>
            <person name="Lin X."/>
            <person name="Liu S.X."/>
            <person name="Liu Z.A."/>
            <person name="Luros J.S."/>
            <person name="Maiti R."/>
            <person name="Marziali A."/>
            <person name="Militscher J."/>
            <person name="Miranda M."/>
            <person name="Nguyen M."/>
            <person name="Nierman W.C."/>
            <person name="Osborne B.I."/>
            <person name="Pai G."/>
            <person name="Peterson J."/>
            <person name="Pham P.K."/>
            <person name="Rizzo M."/>
            <person name="Rooney T."/>
            <person name="Rowley D."/>
            <person name="Sakano H."/>
            <person name="Salzberg S.L."/>
            <person name="Schwartz J.R."/>
            <person name="Shinn P."/>
            <person name="Southwick A.M."/>
            <person name="Sun H."/>
            <person name="Tallon L.J."/>
            <person name="Tambunga G."/>
            <person name="Toriumi M.J."/>
            <person name="Town C.D."/>
            <person name="Utterback T."/>
            <person name="Van Aken S."/>
            <person name="Vaysberg M."/>
            <person name="Vysotskaia V.S."/>
            <person name="Walker M."/>
            <person name="Wu D."/>
            <person name="Yu G."/>
            <person name="Fraser C.M."/>
            <person name="Venter J.C."/>
            <person name="Davis R.W."/>
        </authorList>
    </citation>
    <scope>NUCLEOTIDE SEQUENCE [LARGE SCALE GENOMIC DNA]</scope>
    <source>
        <strain>cv. Columbia</strain>
    </source>
</reference>
<reference key="2">
    <citation type="journal article" date="2017" name="Plant J.">
        <title>Araport11: a complete reannotation of the Arabidopsis thaliana reference genome.</title>
        <authorList>
            <person name="Cheng C.Y."/>
            <person name="Krishnakumar V."/>
            <person name="Chan A.P."/>
            <person name="Thibaud-Nissen F."/>
            <person name="Schobel S."/>
            <person name="Town C.D."/>
        </authorList>
    </citation>
    <scope>GENOME REANNOTATION</scope>
    <source>
        <strain>cv. Columbia</strain>
    </source>
</reference>
<reference key="3">
    <citation type="journal article" date="2003" name="Science">
        <title>Empirical analysis of transcriptional activity in the Arabidopsis genome.</title>
        <authorList>
            <person name="Yamada K."/>
            <person name="Lim J."/>
            <person name="Dale J.M."/>
            <person name="Chen H."/>
            <person name="Shinn P."/>
            <person name="Palm C.J."/>
            <person name="Southwick A.M."/>
            <person name="Wu H.C."/>
            <person name="Kim C.J."/>
            <person name="Nguyen M."/>
            <person name="Pham P.K."/>
            <person name="Cheuk R.F."/>
            <person name="Karlin-Newmann G."/>
            <person name="Liu S.X."/>
            <person name="Lam B."/>
            <person name="Sakano H."/>
            <person name="Wu T."/>
            <person name="Yu G."/>
            <person name="Miranda M."/>
            <person name="Quach H.L."/>
            <person name="Tripp M."/>
            <person name="Chang C.H."/>
            <person name="Lee J.M."/>
            <person name="Toriumi M.J."/>
            <person name="Chan M.M."/>
            <person name="Tang C.C."/>
            <person name="Onodera C.S."/>
            <person name="Deng J.M."/>
            <person name="Akiyama K."/>
            <person name="Ansari Y."/>
            <person name="Arakawa T."/>
            <person name="Banh J."/>
            <person name="Banno F."/>
            <person name="Bowser L."/>
            <person name="Brooks S.Y."/>
            <person name="Carninci P."/>
            <person name="Chao Q."/>
            <person name="Choy N."/>
            <person name="Enju A."/>
            <person name="Goldsmith A.D."/>
            <person name="Gurjal M."/>
            <person name="Hansen N.F."/>
            <person name="Hayashizaki Y."/>
            <person name="Johnson-Hopson C."/>
            <person name="Hsuan V.W."/>
            <person name="Iida K."/>
            <person name="Karnes M."/>
            <person name="Khan S."/>
            <person name="Koesema E."/>
            <person name="Ishida J."/>
            <person name="Jiang P.X."/>
            <person name="Jones T."/>
            <person name="Kawai J."/>
            <person name="Kamiya A."/>
            <person name="Meyers C."/>
            <person name="Nakajima M."/>
            <person name="Narusaka M."/>
            <person name="Seki M."/>
            <person name="Sakurai T."/>
            <person name="Satou M."/>
            <person name="Tamse R."/>
            <person name="Vaysberg M."/>
            <person name="Wallender E.K."/>
            <person name="Wong C."/>
            <person name="Yamamura Y."/>
            <person name="Yuan S."/>
            <person name="Shinozaki K."/>
            <person name="Davis R.W."/>
            <person name="Theologis A."/>
            <person name="Ecker J.R."/>
        </authorList>
    </citation>
    <scope>NUCLEOTIDE SEQUENCE [LARGE SCALE MRNA]</scope>
    <source>
        <strain>cv. Columbia</strain>
    </source>
</reference>
<reference key="4">
    <citation type="submission" date="2002-03" db="EMBL/GenBank/DDBJ databases">
        <title>Full-length cDNA from Arabidopsis thaliana.</title>
        <authorList>
            <person name="Brover V.V."/>
            <person name="Troukhan M.E."/>
            <person name="Alexandrov N.A."/>
            <person name="Lu Y.-P."/>
            <person name="Flavell R.B."/>
            <person name="Feldmann K.A."/>
        </authorList>
    </citation>
    <scope>NUCLEOTIDE SEQUENCE [LARGE SCALE MRNA]</scope>
</reference>
<reference key="5">
    <citation type="journal article" date="2009" name="Plant Physiol.">
        <title>Large-scale Arabidopsis phosphoproteome profiling reveals novel chloroplast kinase substrates and phosphorylation networks.</title>
        <authorList>
            <person name="Reiland S."/>
            <person name="Messerli G."/>
            <person name="Baerenfaller K."/>
            <person name="Gerrits B."/>
            <person name="Endler A."/>
            <person name="Grossmann J."/>
            <person name="Gruissem W."/>
            <person name="Baginsky S."/>
        </authorList>
    </citation>
    <scope>IDENTIFICATION BY MASS SPECTROMETRY [LARGE SCALE ANALYSIS]</scope>
</reference>
<dbReference type="EMBL" id="AC020889">
    <property type="protein sequence ID" value="AAF79709.1"/>
    <property type="status" value="ALT_SEQ"/>
    <property type="molecule type" value="Genomic_DNA"/>
</dbReference>
<dbReference type="EMBL" id="CP002684">
    <property type="protein sequence ID" value="AEE32326.1"/>
    <property type="molecule type" value="Genomic_DNA"/>
</dbReference>
<dbReference type="EMBL" id="AY133568">
    <property type="protein sequence ID" value="AAM91398.1"/>
    <property type="molecule type" value="mRNA"/>
</dbReference>
<dbReference type="EMBL" id="AY048274">
    <property type="protein sequence ID" value="AAK82536.1"/>
    <property type="molecule type" value="mRNA"/>
</dbReference>
<dbReference type="EMBL" id="AY088093">
    <property type="protein sequence ID" value="AAM65639.1"/>
    <property type="molecule type" value="mRNA"/>
</dbReference>
<dbReference type="RefSeq" id="NP_564531.1">
    <molecule id="Q94AD1-1"/>
    <property type="nucleotide sequence ID" value="NM_103757.3"/>
</dbReference>
<dbReference type="SMR" id="Q94AD1"/>
<dbReference type="BioGRID" id="26507">
    <property type="interactions" value="3"/>
</dbReference>
<dbReference type="FunCoup" id="Q94AD1">
    <property type="interactions" value="155"/>
</dbReference>
<dbReference type="STRING" id="3702.Q94AD1"/>
<dbReference type="GlyGen" id="Q94AD1">
    <property type="glycosylation" value="1 site"/>
</dbReference>
<dbReference type="iPTMnet" id="Q94AD1"/>
<dbReference type="PaxDb" id="3702-AT1G48610.1"/>
<dbReference type="ProteomicsDB" id="222671">
    <molecule id="Q94AD1-1"/>
</dbReference>
<dbReference type="EnsemblPlants" id="AT1G48610.1">
    <molecule id="Q94AD1-1"/>
    <property type="protein sequence ID" value="AT1G48610.1"/>
    <property type="gene ID" value="AT1G48610"/>
</dbReference>
<dbReference type="GeneID" id="841282"/>
<dbReference type="Gramene" id="AT1G48610.1">
    <molecule id="Q94AD1-1"/>
    <property type="protein sequence ID" value="AT1G48610.1"/>
    <property type="gene ID" value="AT1G48610"/>
</dbReference>
<dbReference type="KEGG" id="ath:AT1G48610"/>
<dbReference type="Araport" id="AT1G48610"/>
<dbReference type="TAIR" id="AT1G48610"/>
<dbReference type="eggNOG" id="KOG0672">
    <property type="taxonomic scope" value="Eukaryota"/>
</dbReference>
<dbReference type="HOGENOM" id="CLU_1301205_0_0_1"/>
<dbReference type="InParanoid" id="Q94AD1"/>
<dbReference type="CD-CODE" id="4299E36E">
    <property type="entry name" value="Nucleolus"/>
</dbReference>
<dbReference type="PRO" id="PR:Q94AD1"/>
<dbReference type="Proteomes" id="UP000006548">
    <property type="component" value="Chromosome 1"/>
</dbReference>
<dbReference type="ExpressionAtlas" id="Q94AD1">
    <property type="expression patterns" value="baseline and differential"/>
</dbReference>
<dbReference type="GO" id="GO:0005634">
    <property type="term" value="C:nucleus"/>
    <property type="evidence" value="ECO:0007005"/>
    <property type="project" value="TAIR"/>
</dbReference>
<dbReference type="GO" id="GO:0003677">
    <property type="term" value="F:DNA binding"/>
    <property type="evidence" value="ECO:0007669"/>
    <property type="project" value="UniProtKB-KW"/>
</dbReference>
<dbReference type="InterPro" id="IPR017956">
    <property type="entry name" value="AT_hook_DNA-bd_motif"/>
</dbReference>
<dbReference type="PRINTS" id="PR00929">
    <property type="entry name" value="ATHOOK"/>
</dbReference>
<dbReference type="SMART" id="SM00384">
    <property type="entry name" value="AT_hook"/>
    <property type="match status" value="4"/>
</dbReference>
<keyword id="KW-0025">Alternative splicing</keyword>
<keyword id="KW-0175">Coiled coil</keyword>
<keyword id="KW-0238">DNA-binding</keyword>
<keyword id="KW-0539">Nucleus</keyword>
<keyword id="KW-1185">Reference proteome</keyword>
<keyword id="KW-0677">Repeat</keyword>
<gene>
    <name type="ordered locus">At1g48610</name>
    <name type="ORF">T1N15.24</name>
</gene>
<comment type="function">
    <text evidence="3">May bind DNA.</text>
</comment>
<comment type="subcellular location">
    <subcellularLocation>
        <location evidence="3">Nucleus</location>
    </subcellularLocation>
</comment>
<comment type="alternative products">
    <event type="alternative splicing"/>
    <isoform>
        <id>Q94AD1-1</id>
        <name>1</name>
        <sequence type="displayed"/>
    </isoform>
    <text>A number of isoforms are produced. According to EST sequences.</text>
</comment>
<comment type="sequence caution" evidence="3">
    <conflict type="erroneous gene model prediction">
        <sequence resource="EMBL-CDS" id="AAF79709"/>
    </conflict>
    <text>The predicted gene At1g48610 has been split into 2 genes: At1g48605 and At1g48610.</text>
</comment>
<protein>
    <recommendedName>
        <fullName>Putative DNA-binding protein At1g48610</fullName>
    </recommendedName>
    <alternativeName>
        <fullName>AT-hook DNA-binding motif-containing protein At1g48610</fullName>
    </alternativeName>
</protein>